<proteinExistence type="inferred from homology"/>
<comment type="function">
    <text evidence="1">May play a role in DNA repair. It seems to be involved in an RecBC-independent recombinational process of DNA repair. It may act with RecF and RecO.</text>
</comment>
<comment type="similarity">
    <text evidence="1">Belongs to the RecR family.</text>
</comment>
<dbReference type="EMBL" id="CP000821">
    <property type="protein sequence ID" value="ABV37457.1"/>
    <property type="molecule type" value="Genomic_DNA"/>
</dbReference>
<dbReference type="RefSeq" id="WP_012143187.1">
    <property type="nucleotide sequence ID" value="NC_009831.1"/>
</dbReference>
<dbReference type="SMR" id="A8FX84"/>
<dbReference type="STRING" id="425104.Ssed_2850"/>
<dbReference type="KEGG" id="sse:Ssed_2850"/>
<dbReference type="eggNOG" id="COG0353">
    <property type="taxonomic scope" value="Bacteria"/>
</dbReference>
<dbReference type="HOGENOM" id="CLU_060739_1_2_6"/>
<dbReference type="OrthoDB" id="9802672at2"/>
<dbReference type="Proteomes" id="UP000002015">
    <property type="component" value="Chromosome"/>
</dbReference>
<dbReference type="GO" id="GO:0003677">
    <property type="term" value="F:DNA binding"/>
    <property type="evidence" value="ECO:0007669"/>
    <property type="project" value="UniProtKB-UniRule"/>
</dbReference>
<dbReference type="GO" id="GO:0008270">
    <property type="term" value="F:zinc ion binding"/>
    <property type="evidence" value="ECO:0007669"/>
    <property type="project" value="UniProtKB-KW"/>
</dbReference>
<dbReference type="GO" id="GO:0006310">
    <property type="term" value="P:DNA recombination"/>
    <property type="evidence" value="ECO:0007669"/>
    <property type="project" value="UniProtKB-UniRule"/>
</dbReference>
<dbReference type="GO" id="GO:0006281">
    <property type="term" value="P:DNA repair"/>
    <property type="evidence" value="ECO:0007669"/>
    <property type="project" value="UniProtKB-UniRule"/>
</dbReference>
<dbReference type="CDD" id="cd01025">
    <property type="entry name" value="TOPRIM_recR"/>
    <property type="match status" value="1"/>
</dbReference>
<dbReference type="FunFam" id="3.40.1360.10:FF:000001">
    <property type="entry name" value="Recombination protein RecR"/>
    <property type="match status" value="1"/>
</dbReference>
<dbReference type="Gene3D" id="3.40.1360.10">
    <property type="match status" value="1"/>
</dbReference>
<dbReference type="Gene3D" id="6.10.250.240">
    <property type="match status" value="1"/>
</dbReference>
<dbReference type="Gene3D" id="1.10.8.420">
    <property type="entry name" value="RecR Domain 1"/>
    <property type="match status" value="1"/>
</dbReference>
<dbReference type="HAMAP" id="MF_00017">
    <property type="entry name" value="RecR"/>
    <property type="match status" value="1"/>
</dbReference>
<dbReference type="InterPro" id="IPR000093">
    <property type="entry name" value="DNA_Rcmb_RecR"/>
</dbReference>
<dbReference type="InterPro" id="IPR023627">
    <property type="entry name" value="Rcmb_RecR"/>
</dbReference>
<dbReference type="InterPro" id="IPR015967">
    <property type="entry name" value="Rcmb_RecR_Znf"/>
</dbReference>
<dbReference type="InterPro" id="IPR006171">
    <property type="entry name" value="TOPRIM_dom"/>
</dbReference>
<dbReference type="InterPro" id="IPR034137">
    <property type="entry name" value="TOPRIM_RecR"/>
</dbReference>
<dbReference type="NCBIfam" id="TIGR00615">
    <property type="entry name" value="recR"/>
    <property type="match status" value="1"/>
</dbReference>
<dbReference type="PANTHER" id="PTHR30446">
    <property type="entry name" value="RECOMBINATION PROTEIN RECR"/>
    <property type="match status" value="1"/>
</dbReference>
<dbReference type="PANTHER" id="PTHR30446:SF0">
    <property type="entry name" value="RECOMBINATION PROTEIN RECR"/>
    <property type="match status" value="1"/>
</dbReference>
<dbReference type="Pfam" id="PF21175">
    <property type="entry name" value="RecR_C"/>
    <property type="match status" value="1"/>
</dbReference>
<dbReference type="Pfam" id="PF21176">
    <property type="entry name" value="RecR_HhH"/>
    <property type="match status" value="1"/>
</dbReference>
<dbReference type="Pfam" id="PF02132">
    <property type="entry name" value="RecR_ZnF"/>
    <property type="match status" value="1"/>
</dbReference>
<dbReference type="Pfam" id="PF13662">
    <property type="entry name" value="Toprim_4"/>
    <property type="match status" value="1"/>
</dbReference>
<dbReference type="SMART" id="SM00493">
    <property type="entry name" value="TOPRIM"/>
    <property type="match status" value="1"/>
</dbReference>
<dbReference type="SUPFAM" id="SSF111304">
    <property type="entry name" value="Recombination protein RecR"/>
    <property type="match status" value="1"/>
</dbReference>
<dbReference type="PROSITE" id="PS50880">
    <property type="entry name" value="TOPRIM"/>
    <property type="match status" value="1"/>
</dbReference>
<reference key="1">
    <citation type="submission" date="2007-08" db="EMBL/GenBank/DDBJ databases">
        <title>Complete sequence of Shewanella sediminis HAW-EB3.</title>
        <authorList>
            <consortium name="US DOE Joint Genome Institute"/>
            <person name="Copeland A."/>
            <person name="Lucas S."/>
            <person name="Lapidus A."/>
            <person name="Barry K."/>
            <person name="Glavina del Rio T."/>
            <person name="Dalin E."/>
            <person name="Tice H."/>
            <person name="Pitluck S."/>
            <person name="Chertkov O."/>
            <person name="Brettin T."/>
            <person name="Bruce D."/>
            <person name="Detter J.C."/>
            <person name="Han C."/>
            <person name="Schmutz J."/>
            <person name="Larimer F."/>
            <person name="Land M."/>
            <person name="Hauser L."/>
            <person name="Kyrpides N."/>
            <person name="Kim E."/>
            <person name="Zhao J.-S."/>
            <person name="Richardson P."/>
        </authorList>
    </citation>
    <scope>NUCLEOTIDE SEQUENCE [LARGE SCALE GENOMIC DNA]</scope>
    <source>
        <strain>HAW-EB3</strain>
    </source>
</reference>
<gene>
    <name evidence="1" type="primary">recR</name>
    <name type="ordered locus">Ssed_2850</name>
</gene>
<sequence>MKFSPLVDELIQSLKCLPGVGPKSAQRMAFQLLERDRKAGQTLAQALASAMSDVGHCRSCRTFTEESHCPICASNKRGQSEQICVVETPADVLAIEAGGHFSGRYFVLLGHLSPLDGVGPEELGLSLLEEHLCSGGVSELILATNPTVEGDATAHFIADMAKVHNVSVSRIAHGVPVGGELEYVDSTTLALSFNGRLPI</sequence>
<organism>
    <name type="scientific">Shewanella sediminis (strain HAW-EB3)</name>
    <dbReference type="NCBI Taxonomy" id="425104"/>
    <lineage>
        <taxon>Bacteria</taxon>
        <taxon>Pseudomonadati</taxon>
        <taxon>Pseudomonadota</taxon>
        <taxon>Gammaproteobacteria</taxon>
        <taxon>Alteromonadales</taxon>
        <taxon>Shewanellaceae</taxon>
        <taxon>Shewanella</taxon>
    </lineage>
</organism>
<accession>A8FX84</accession>
<feature type="chain" id="PRO_1000074134" description="Recombination protein RecR">
    <location>
        <begin position="1"/>
        <end position="199"/>
    </location>
</feature>
<feature type="domain" description="Toprim" evidence="1">
    <location>
        <begin position="81"/>
        <end position="176"/>
    </location>
</feature>
<feature type="zinc finger region" description="C4-type" evidence="1">
    <location>
        <begin position="57"/>
        <end position="72"/>
    </location>
</feature>
<name>RECR_SHESH</name>
<evidence type="ECO:0000255" key="1">
    <source>
        <dbReference type="HAMAP-Rule" id="MF_00017"/>
    </source>
</evidence>
<protein>
    <recommendedName>
        <fullName evidence="1">Recombination protein RecR</fullName>
    </recommendedName>
</protein>
<keyword id="KW-0227">DNA damage</keyword>
<keyword id="KW-0233">DNA recombination</keyword>
<keyword id="KW-0234">DNA repair</keyword>
<keyword id="KW-0479">Metal-binding</keyword>
<keyword id="KW-1185">Reference proteome</keyword>
<keyword id="KW-0862">Zinc</keyword>
<keyword id="KW-0863">Zinc-finger</keyword>